<feature type="chain" id="PRO_0000103773" description="Multidrug efflux pump Tap">
    <location>
        <begin position="1"/>
        <end position="419"/>
    </location>
</feature>
<feature type="transmembrane region" description="Helical" evidence="2">
    <location>
        <begin position="7"/>
        <end position="29"/>
    </location>
</feature>
<feature type="transmembrane region" description="Helical" evidence="2">
    <location>
        <begin position="44"/>
        <end position="66"/>
    </location>
</feature>
<feature type="transmembrane region" description="Helical" evidence="2">
    <location>
        <begin position="73"/>
        <end position="95"/>
    </location>
</feature>
<feature type="transmembrane region" description="Helical" evidence="2">
    <location>
        <begin position="100"/>
        <end position="122"/>
    </location>
</feature>
<feature type="transmembrane region" description="Helical" evidence="2">
    <location>
        <begin position="149"/>
        <end position="171"/>
    </location>
</feature>
<feature type="transmembrane region" description="Helical" evidence="2">
    <location>
        <begin position="175"/>
        <end position="197"/>
    </location>
</feature>
<feature type="transmembrane region" description="Helical" evidence="2">
    <location>
        <begin position="218"/>
        <end position="240"/>
    </location>
</feature>
<feature type="transmembrane region" description="Helical" evidence="2">
    <location>
        <begin position="260"/>
        <end position="282"/>
    </location>
</feature>
<feature type="transmembrane region" description="Helical" evidence="2">
    <location>
        <begin position="289"/>
        <end position="308"/>
    </location>
</feature>
<feature type="transmembrane region" description="Helical" evidence="2">
    <location>
        <begin position="313"/>
        <end position="335"/>
    </location>
</feature>
<feature type="transmembrane region" description="Helical" evidence="2">
    <location>
        <begin position="348"/>
        <end position="370"/>
    </location>
</feature>
<feature type="transmembrane region" description="Helical" evidence="2">
    <location>
        <begin position="375"/>
        <end position="397"/>
    </location>
</feature>
<organism>
    <name type="scientific">Mycobacterium bovis (strain ATCC BAA-935 / AF2122/97)</name>
    <dbReference type="NCBI Taxonomy" id="233413"/>
    <lineage>
        <taxon>Bacteria</taxon>
        <taxon>Bacillati</taxon>
        <taxon>Actinomycetota</taxon>
        <taxon>Actinomycetes</taxon>
        <taxon>Mycobacteriales</taxon>
        <taxon>Mycobacteriaceae</taxon>
        <taxon>Mycobacterium</taxon>
        <taxon>Mycobacterium tuberculosis complex</taxon>
    </lineage>
</organism>
<name>TAP_MYCBO</name>
<accession>P64784</accession>
<accession>A0A1R3XXV0</accession>
<accession>Q11060</accession>
<accession>X2BHU3</accession>
<protein>
    <recommendedName>
        <fullName evidence="1">Multidrug efflux pump Tap</fullName>
    </recommendedName>
</protein>
<keyword id="KW-0046">Antibiotic resistance</keyword>
<keyword id="KW-0997">Cell inner membrane</keyword>
<keyword id="KW-1003">Cell membrane</keyword>
<keyword id="KW-0472">Membrane</keyword>
<keyword id="KW-1185">Reference proteome</keyword>
<keyword id="KW-0812">Transmembrane</keyword>
<keyword id="KW-1133">Transmembrane helix</keyword>
<keyword id="KW-0813">Transport</keyword>
<dbReference type="EMBL" id="LT708304">
    <property type="protein sequence ID" value="SIT99889.1"/>
    <property type="molecule type" value="Genomic_DNA"/>
</dbReference>
<dbReference type="RefSeq" id="NP_854942.1">
    <property type="nucleotide sequence ID" value="NC_002945.3"/>
</dbReference>
<dbReference type="RefSeq" id="WP_003406359.1">
    <property type="nucleotide sequence ID" value="NC_002945.4"/>
</dbReference>
<dbReference type="SMR" id="P64784"/>
<dbReference type="KEGG" id="mbo:BQ2027_MB1288C"/>
<dbReference type="PATRIC" id="fig|233413.5.peg.1413"/>
<dbReference type="Proteomes" id="UP000001419">
    <property type="component" value="Chromosome"/>
</dbReference>
<dbReference type="GO" id="GO:0005886">
    <property type="term" value="C:plasma membrane"/>
    <property type="evidence" value="ECO:0007669"/>
    <property type="project" value="UniProtKB-SubCell"/>
</dbReference>
<dbReference type="GO" id="GO:0022857">
    <property type="term" value="F:transmembrane transporter activity"/>
    <property type="evidence" value="ECO:0007669"/>
    <property type="project" value="InterPro"/>
</dbReference>
<dbReference type="GO" id="GO:0046677">
    <property type="term" value="P:response to antibiotic"/>
    <property type="evidence" value="ECO:0007669"/>
    <property type="project" value="UniProtKB-KW"/>
</dbReference>
<dbReference type="CDD" id="cd06173">
    <property type="entry name" value="MFS_MefA_like"/>
    <property type="match status" value="1"/>
</dbReference>
<dbReference type="Gene3D" id="1.20.1250.20">
    <property type="entry name" value="MFS general substrate transporter like domains"/>
    <property type="match status" value="2"/>
</dbReference>
<dbReference type="InterPro" id="IPR011701">
    <property type="entry name" value="MFS"/>
</dbReference>
<dbReference type="InterPro" id="IPR020846">
    <property type="entry name" value="MFS_dom"/>
</dbReference>
<dbReference type="InterPro" id="IPR036259">
    <property type="entry name" value="MFS_trans_sf"/>
</dbReference>
<dbReference type="PANTHER" id="PTHR23513:SF9">
    <property type="entry name" value="ENTEROBACTIN EXPORTER ENTS"/>
    <property type="match status" value="1"/>
</dbReference>
<dbReference type="PANTHER" id="PTHR23513">
    <property type="entry name" value="INTEGRAL MEMBRANE EFFLUX PROTEIN-RELATED"/>
    <property type="match status" value="1"/>
</dbReference>
<dbReference type="Pfam" id="PF07690">
    <property type="entry name" value="MFS_1"/>
    <property type="match status" value="1"/>
</dbReference>
<dbReference type="SUPFAM" id="SSF103473">
    <property type="entry name" value="MFS general substrate transporter"/>
    <property type="match status" value="1"/>
</dbReference>
<dbReference type="PROSITE" id="PS50850">
    <property type="entry name" value="MFS"/>
    <property type="match status" value="1"/>
</dbReference>
<proteinExistence type="inferred from homology"/>
<gene>
    <name evidence="1" type="primary">tap</name>
    <name type="ordered locus">BQ2027_MB1288C</name>
</gene>
<reference key="1">
    <citation type="journal article" date="2003" name="Proc. Natl. Acad. Sci. U.S.A.">
        <title>The complete genome sequence of Mycobacterium bovis.</title>
        <authorList>
            <person name="Garnier T."/>
            <person name="Eiglmeier K."/>
            <person name="Camus J.-C."/>
            <person name="Medina N."/>
            <person name="Mansoor H."/>
            <person name="Pryor M."/>
            <person name="Duthoy S."/>
            <person name="Grondin S."/>
            <person name="Lacroix C."/>
            <person name="Monsempe C."/>
            <person name="Simon S."/>
            <person name="Harris B."/>
            <person name="Atkin R."/>
            <person name="Doggett J."/>
            <person name="Mayes R."/>
            <person name="Keating L."/>
            <person name="Wheeler P.R."/>
            <person name="Parkhill J."/>
            <person name="Barrell B.G."/>
            <person name="Cole S.T."/>
            <person name="Gordon S.V."/>
            <person name="Hewinson R.G."/>
        </authorList>
    </citation>
    <scope>NUCLEOTIDE SEQUENCE [LARGE SCALE GENOMIC DNA]</scope>
    <source>
        <strain>ATCC BAA-935 / AF2122/97</strain>
    </source>
</reference>
<reference key="2">
    <citation type="journal article" date="2017" name="Genome Announc.">
        <title>Updated reference genome sequence and annotation of Mycobacterium bovis AF2122/97.</title>
        <authorList>
            <person name="Malone K.M."/>
            <person name="Farrell D."/>
            <person name="Stuber T.P."/>
            <person name="Schubert O.T."/>
            <person name="Aebersold R."/>
            <person name="Robbe-Austerman S."/>
            <person name="Gordon S.V."/>
        </authorList>
    </citation>
    <scope>NUCLEOTIDE SEQUENCE [LARGE SCALE GENOMIC DNA]</scope>
    <scope>GENOME REANNOTATION</scope>
    <source>
        <strain>ATCC BAA-935 / AF2122/97</strain>
    </source>
</reference>
<sequence length="419" mass="43287">MRNSNRGPAFLILFATLMAAAGDGVSIVAFPWLVLQREGSAGQASIVASATMLPLLFATLVAGTAVDYFGRRRVSMVADALSGAAVAGVPLVAWGYGGDAVNVLVLAVLAALAAAFGPAGMTARDSMLPEAAARAGWSLDRINGAYEAILNLAFIVGPAIGGLMIATVGGITTMWITATAFGLSILAIAALQLEGAGKPHHTSRPQGLVSGIAEGLRFVWNLRVLRTLGMIDLTVTALYLPMESVLFPKYFTDHQQPVQLGWALMAIAGGGLVGALGYAVLAIRVPRRVTMSTAVLTLGLASMVIAFLPPLPVIMVLCAVVGLVYGPIQPIYNYVIQTRAAQHLRGRVVGVMTSLAYAAGPLGLLLAGPLTDAAGLHATFLALALPIVCTGLVAIRLPALRELDLAPQADIDRPVGSAQ</sequence>
<evidence type="ECO:0000250" key="1">
    <source>
        <dbReference type="UniProtKB" id="O32859"/>
    </source>
</evidence>
<evidence type="ECO:0000255" key="2"/>
<evidence type="ECO:0000305" key="3"/>
<comment type="function">
    <text evidence="1">Efflux pump that contributes to intrinsic antibiotic resistance. The pump uses the electrochemical gradient as a source of energy.</text>
</comment>
<comment type="subcellular location">
    <subcellularLocation>
        <location evidence="1">Cell inner membrane</location>
        <topology evidence="2">Multi-pass membrane protein</topology>
    </subcellularLocation>
</comment>
<comment type="similarity">
    <text evidence="3">Belongs to the major facilitator superfamily. Drug:H(+) antiporter-3 (DHA3) (TC 2.A.1.21) family.</text>
</comment>